<protein>
    <recommendedName>
        <fullName>Probable beta-galactosidase C</fullName>
        <ecNumber>3.2.1.23</ecNumber>
    </recommendedName>
    <alternativeName>
        <fullName>Lactase C</fullName>
    </alternativeName>
</protein>
<comment type="function">
    <text evidence="1">Cleaves beta-linked terminal galactosyl residues from gangliosides, glycoproteins, and glycosaminoglycans.</text>
</comment>
<comment type="catalytic activity">
    <reaction>
        <text>Hydrolysis of terminal non-reducing beta-D-galactose residues in beta-D-galactosides.</text>
        <dbReference type="EC" id="3.2.1.23"/>
    </reaction>
</comment>
<comment type="subcellular location">
    <subcellularLocation>
        <location evidence="1">Secreted</location>
    </subcellularLocation>
</comment>
<comment type="similarity">
    <text evidence="3">Belongs to the glycosyl hydrolase 35 family.</text>
</comment>
<reference key="1">
    <citation type="journal article" date="2008" name="PLoS Genet.">
        <title>Genomic islands in the pathogenic filamentous fungus Aspergillus fumigatus.</title>
        <authorList>
            <person name="Fedorova N.D."/>
            <person name="Khaldi N."/>
            <person name="Joardar V.S."/>
            <person name="Maiti R."/>
            <person name="Amedeo P."/>
            <person name="Anderson M.J."/>
            <person name="Crabtree J."/>
            <person name="Silva J.C."/>
            <person name="Badger J.H."/>
            <person name="Albarraq A."/>
            <person name="Angiuoli S."/>
            <person name="Bussey H."/>
            <person name="Bowyer P."/>
            <person name="Cotty P.J."/>
            <person name="Dyer P.S."/>
            <person name="Egan A."/>
            <person name="Galens K."/>
            <person name="Fraser-Liggett C.M."/>
            <person name="Haas B.J."/>
            <person name="Inman J.M."/>
            <person name="Kent R."/>
            <person name="Lemieux S."/>
            <person name="Malavazi I."/>
            <person name="Orvis J."/>
            <person name="Roemer T."/>
            <person name="Ronning C.M."/>
            <person name="Sundaram J.P."/>
            <person name="Sutton G."/>
            <person name="Turner G."/>
            <person name="Venter J.C."/>
            <person name="White O.R."/>
            <person name="Whitty B.R."/>
            <person name="Youngman P."/>
            <person name="Wolfe K.H."/>
            <person name="Goldman G.H."/>
            <person name="Wortman J.R."/>
            <person name="Jiang B."/>
            <person name="Denning D.W."/>
            <person name="Nierman W.C."/>
        </authorList>
    </citation>
    <scope>NUCLEOTIDE SEQUENCE [LARGE SCALE GENOMIC DNA]</scope>
    <source>
        <strain>ATCC 1020 / DSM 3700 / CBS 544.65 / FGSC A1164 / JCM 1740 / NRRL 181 / WB 181</strain>
    </source>
</reference>
<gene>
    <name type="primary">lacC</name>
    <name type="ORF">NFIA_052310</name>
</gene>
<name>BGALC_NEOFI</name>
<dbReference type="EC" id="3.2.1.23"/>
<dbReference type="EMBL" id="DS027698">
    <property type="protein sequence ID" value="EAW15886.1"/>
    <property type="molecule type" value="Genomic_DNA"/>
</dbReference>
<dbReference type="RefSeq" id="XP_001257783.1">
    <property type="nucleotide sequence ID" value="XM_001257782.1"/>
</dbReference>
<dbReference type="SMR" id="A1DM65"/>
<dbReference type="STRING" id="331117.A1DM65"/>
<dbReference type="GlyCosmos" id="A1DM65">
    <property type="glycosylation" value="11 sites, No reported glycans"/>
</dbReference>
<dbReference type="EnsemblFungi" id="EAW15886">
    <property type="protein sequence ID" value="EAW15886"/>
    <property type="gene ID" value="NFIA_052310"/>
</dbReference>
<dbReference type="GeneID" id="4584298"/>
<dbReference type="KEGG" id="nfi:NFIA_052310"/>
<dbReference type="VEuPathDB" id="FungiDB:NFIA_052310"/>
<dbReference type="eggNOG" id="KOG0496">
    <property type="taxonomic scope" value="Eukaryota"/>
</dbReference>
<dbReference type="HOGENOM" id="CLU_005732_2_1_1"/>
<dbReference type="OMA" id="PEFEGGW"/>
<dbReference type="OrthoDB" id="1657402at2759"/>
<dbReference type="Proteomes" id="UP000006702">
    <property type="component" value="Unassembled WGS sequence"/>
</dbReference>
<dbReference type="GO" id="GO:0005576">
    <property type="term" value="C:extracellular region"/>
    <property type="evidence" value="ECO:0007669"/>
    <property type="project" value="UniProtKB-SubCell"/>
</dbReference>
<dbReference type="GO" id="GO:0004565">
    <property type="term" value="F:beta-galactosidase activity"/>
    <property type="evidence" value="ECO:0007669"/>
    <property type="project" value="UniProtKB-EC"/>
</dbReference>
<dbReference type="GO" id="GO:0000272">
    <property type="term" value="P:polysaccharide catabolic process"/>
    <property type="evidence" value="ECO:0007669"/>
    <property type="project" value="UniProtKB-KW"/>
</dbReference>
<dbReference type="FunFam" id="2.102.20.10:FF:000001">
    <property type="entry name" value="Beta-galactosidase A"/>
    <property type="match status" value="1"/>
</dbReference>
<dbReference type="FunFam" id="2.60.120.260:FF:000065">
    <property type="entry name" value="Beta-galactosidase A"/>
    <property type="match status" value="1"/>
</dbReference>
<dbReference type="FunFam" id="2.60.390.10:FF:000001">
    <property type="entry name" value="Beta-galactosidase A"/>
    <property type="match status" value="1"/>
</dbReference>
<dbReference type="FunFam" id="3.20.20.80:FF:000040">
    <property type="entry name" value="Beta-galactosidase A"/>
    <property type="match status" value="1"/>
</dbReference>
<dbReference type="FunFam" id="2.60.120.260:FF:000144">
    <property type="entry name" value="Probable beta-galactosidase C"/>
    <property type="match status" value="1"/>
</dbReference>
<dbReference type="Gene3D" id="2.102.20.10">
    <property type="entry name" value="Beta-galactosidase, domain 2"/>
    <property type="match status" value="1"/>
</dbReference>
<dbReference type="Gene3D" id="2.60.390.10">
    <property type="entry name" value="Beta-galactosidase, domain 3"/>
    <property type="match status" value="1"/>
</dbReference>
<dbReference type="Gene3D" id="2.60.120.260">
    <property type="entry name" value="Galactose-binding domain-like"/>
    <property type="match status" value="2"/>
</dbReference>
<dbReference type="Gene3D" id="3.20.20.80">
    <property type="entry name" value="Glycosidases"/>
    <property type="match status" value="1"/>
</dbReference>
<dbReference type="InterPro" id="IPR018954">
    <property type="entry name" value="Betagal_dom2"/>
</dbReference>
<dbReference type="InterPro" id="IPR037110">
    <property type="entry name" value="Betagal_dom2_sf"/>
</dbReference>
<dbReference type="InterPro" id="IPR025972">
    <property type="entry name" value="BetaGal_dom3"/>
</dbReference>
<dbReference type="InterPro" id="IPR036833">
    <property type="entry name" value="BetaGal_dom3_sf"/>
</dbReference>
<dbReference type="InterPro" id="IPR025300">
    <property type="entry name" value="BetaGal_jelly_roll_dom"/>
</dbReference>
<dbReference type="InterPro" id="IPR008979">
    <property type="entry name" value="Galactose-bd-like_sf"/>
</dbReference>
<dbReference type="InterPro" id="IPR031330">
    <property type="entry name" value="Gly_Hdrlase_35_cat"/>
</dbReference>
<dbReference type="InterPro" id="IPR001944">
    <property type="entry name" value="Glycoside_Hdrlase_35"/>
</dbReference>
<dbReference type="InterPro" id="IPR017853">
    <property type="entry name" value="Glycoside_hydrolase_SF"/>
</dbReference>
<dbReference type="PANTHER" id="PTHR23421">
    <property type="entry name" value="BETA-GALACTOSIDASE RELATED"/>
    <property type="match status" value="1"/>
</dbReference>
<dbReference type="Pfam" id="PF13364">
    <property type="entry name" value="BetaGal_ABD2"/>
    <property type="match status" value="2"/>
</dbReference>
<dbReference type="Pfam" id="PF10435">
    <property type="entry name" value="BetaGal_dom2"/>
    <property type="match status" value="1"/>
</dbReference>
<dbReference type="Pfam" id="PF13363">
    <property type="entry name" value="BetaGal_dom3"/>
    <property type="match status" value="1"/>
</dbReference>
<dbReference type="Pfam" id="PF01301">
    <property type="entry name" value="Glyco_hydro_35"/>
    <property type="match status" value="1"/>
</dbReference>
<dbReference type="PRINTS" id="PR00742">
    <property type="entry name" value="GLHYDRLASE35"/>
</dbReference>
<dbReference type="SMART" id="SM01029">
    <property type="entry name" value="BetaGal_dom2"/>
    <property type="match status" value="1"/>
</dbReference>
<dbReference type="SUPFAM" id="SSF51445">
    <property type="entry name" value="(Trans)glycosidases"/>
    <property type="match status" value="1"/>
</dbReference>
<dbReference type="SUPFAM" id="SSF117100">
    <property type="entry name" value="Beta-galactosidase LacA, domain 3"/>
    <property type="match status" value="1"/>
</dbReference>
<dbReference type="SUPFAM" id="SSF49785">
    <property type="entry name" value="Galactose-binding domain-like"/>
    <property type="match status" value="2"/>
</dbReference>
<dbReference type="SUPFAM" id="SSF51011">
    <property type="entry name" value="Glycosyl hydrolase domain"/>
    <property type="match status" value="1"/>
</dbReference>
<proteinExistence type="inferred from homology"/>
<organism>
    <name type="scientific">Neosartorya fischeri (strain ATCC 1020 / DSM 3700 / CBS 544.65 / FGSC A1164 / JCM 1740 / NRRL 181 / WB 181)</name>
    <name type="common">Aspergillus fischerianus</name>
    <dbReference type="NCBI Taxonomy" id="331117"/>
    <lineage>
        <taxon>Eukaryota</taxon>
        <taxon>Fungi</taxon>
        <taxon>Dikarya</taxon>
        <taxon>Ascomycota</taxon>
        <taxon>Pezizomycotina</taxon>
        <taxon>Eurotiomycetes</taxon>
        <taxon>Eurotiomycetidae</taxon>
        <taxon>Eurotiales</taxon>
        <taxon>Aspergillaceae</taxon>
        <taxon>Aspergillus</taxon>
        <taxon>Aspergillus subgen. Fumigati</taxon>
    </lineage>
</organism>
<keyword id="KW-0119">Carbohydrate metabolism</keyword>
<keyword id="KW-1015">Disulfide bond</keyword>
<keyword id="KW-0325">Glycoprotein</keyword>
<keyword id="KW-0326">Glycosidase</keyword>
<keyword id="KW-0378">Hydrolase</keyword>
<keyword id="KW-0624">Polysaccharide degradation</keyword>
<keyword id="KW-1185">Reference proteome</keyword>
<keyword id="KW-0964">Secreted</keyword>
<keyword id="KW-0732">Signal</keyword>
<feature type="signal peptide" evidence="2">
    <location>
        <begin position="1"/>
        <end position="23"/>
    </location>
</feature>
<feature type="chain" id="PRO_0000395239" description="Probable beta-galactosidase C">
    <location>
        <begin position="24"/>
        <end position="983"/>
    </location>
</feature>
<feature type="active site" description="Proton donor" evidence="2">
    <location>
        <position position="188"/>
    </location>
</feature>
<feature type="active site" description="Nucleophile" evidence="2">
    <location>
        <position position="287"/>
    </location>
</feature>
<feature type="binding site" evidence="1">
    <location>
        <position position="82"/>
    </location>
    <ligand>
        <name>substrate</name>
    </ligand>
</feature>
<feature type="binding site" evidence="1">
    <location>
        <position position="127"/>
    </location>
    <ligand>
        <name>substrate</name>
    </ligand>
</feature>
<feature type="binding site" evidence="1">
    <location>
        <position position="128"/>
    </location>
    <ligand>
        <name>substrate</name>
    </ligand>
</feature>
<feature type="binding site" evidence="1">
    <location>
        <position position="129"/>
    </location>
    <ligand>
        <name>substrate</name>
    </ligand>
</feature>
<feature type="binding site" evidence="1">
    <location>
        <position position="187"/>
    </location>
    <ligand>
        <name>substrate</name>
    </ligand>
</feature>
<feature type="binding site" evidence="1">
    <location>
        <position position="251"/>
    </location>
    <ligand>
        <name>substrate</name>
    </ligand>
</feature>
<feature type="binding site" evidence="1">
    <location>
        <position position="353"/>
    </location>
    <ligand>
        <name>substrate</name>
    </ligand>
</feature>
<feature type="glycosylation site" description="N-linked (GlcNAc...) asparagine" evidence="2">
    <location>
        <position position="197"/>
    </location>
</feature>
<feature type="glycosylation site" description="N-linked (GlcNAc...) asparagine" evidence="2">
    <location>
        <position position="276"/>
    </location>
</feature>
<feature type="glycosylation site" description="N-linked (GlcNAc...) asparagine" evidence="2">
    <location>
        <position position="391"/>
    </location>
</feature>
<feature type="glycosylation site" description="N-linked (GlcNAc...) asparagine" evidence="2">
    <location>
        <position position="434"/>
    </location>
</feature>
<feature type="glycosylation site" description="N-linked (GlcNAc...) asparagine" evidence="2">
    <location>
        <position position="466"/>
    </location>
</feature>
<feature type="glycosylation site" description="N-linked (GlcNAc...) asparagine" evidence="2">
    <location>
        <position position="516"/>
    </location>
</feature>
<feature type="glycosylation site" description="N-linked (GlcNAc...) asparagine" evidence="2">
    <location>
        <position position="601"/>
    </location>
</feature>
<feature type="glycosylation site" description="N-linked (GlcNAc...) asparagine" evidence="2">
    <location>
        <position position="676"/>
    </location>
</feature>
<feature type="glycosylation site" description="N-linked (GlcNAc...) asparagine" evidence="2">
    <location>
        <position position="714"/>
    </location>
</feature>
<feature type="glycosylation site" description="N-linked (GlcNAc...) asparagine" evidence="2">
    <location>
        <position position="719"/>
    </location>
</feature>
<feature type="glycosylation site" description="N-linked (GlcNAc...) asparagine" evidence="2">
    <location>
        <position position="804"/>
    </location>
</feature>
<feature type="disulfide bond" evidence="1">
    <location>
        <begin position="257"/>
        <end position="304"/>
    </location>
</feature>
<accession>A1DM65</accession>
<sequence>MRIFSFLFLLLLGILTGQGLVSGTDNGKTTDVTWDKYSLSVKGQRLFVFSGEFHYQRLPVPELWLDVFQKLRANGFNAISVYFFWSFHSASEGEFDFENGAHDIQRLFDYAKEAGLYVIARAGPYCNAETSAGGFALWAANGQMGNERTSDEAYYEKWRPWILEVGKIIAKNQITNGGPVILNQHENELTETTYDPNHTLVVYMKQIAQVFEEAGIVVPSSHNEKGMRGVSWSTDYHNVGGAVNIYGLDSYPGGLSCTNPNSGFRLVRTYYQWFQNYSSTQPSYMPEFEGGWFQPWGGSFYDTCATELSPEFPDVYYKNNIGSRVTLHSIYMTYGGTNWGHSAAPVVYTSYDYAAPLRETREIRDKLKQTKLIGLFTRVSTDLLKTYMEGNGTGYTSDSSIYTWSLRNPDTNAGFYVLAHSTSSARDVTTFSLNATTSAGAISIPDIELNGRQSKIIVTDYNFGTNSTLLFSSAEVLTYANLDVNVLVFYLNVGQKGTFALKDEPKLAFQTYGNSNVTTSESSYGTQYSYTQGEGVTAVKFSNGVLAYLLDKESAWNFFAPPTTSSPQVAPNEHILVQGPYLVRGASINHGTVEITGDNANTTSIEVYTGNSQVKKVKWNGKTIETRKTAYGSLIGTVPGAEDVKIRLPSLDSWKAQDTLPEIQPDYDDSTWTVCNKTTSVNAIAPLSLPVLYSGDYGYHAGTKVYRGRFDGRNVTGANVTVQNGAAAGWAAWVNGQYAGGSAGSPSLAATSAVLTFNGLSLKDRDNVLTVVTDYTGHDQNSVRPKGTQNPRGILGATLTGGGNFTSWRIQGNAGGEKNIDPVRGPMNEGGLYGERMGWHLPGYKVPKSASKSSPLDGVSGAEGRFYTTTFKLKLDKDLDVPIGLQLGAPEGTKAVVQVFMNGYQFGHYLPHTGPQSLFPFPPGVINNRGENTLAISMWALTDAGAKLDKVELVAYGKYRSGFDFNQDWGYLQPGWKDRSQYA</sequence>
<evidence type="ECO:0000250" key="1"/>
<evidence type="ECO:0000255" key="2"/>
<evidence type="ECO:0000305" key="3"/>